<gene>
    <name evidence="1" type="primary">trmD</name>
    <name type="ordered locus">Fnod_0649</name>
</gene>
<proteinExistence type="inferred from homology"/>
<feature type="chain" id="PRO_1000072638" description="tRNA (guanine-N(1)-)-methyltransferase">
    <location>
        <begin position="1"/>
        <end position="246"/>
    </location>
</feature>
<feature type="binding site" evidence="1">
    <location>
        <position position="112"/>
    </location>
    <ligand>
        <name>S-adenosyl-L-methionine</name>
        <dbReference type="ChEBI" id="CHEBI:59789"/>
    </ligand>
</feature>
<feature type="binding site" evidence="1">
    <location>
        <begin position="131"/>
        <end position="136"/>
    </location>
    <ligand>
        <name>S-adenosyl-L-methionine</name>
        <dbReference type="ChEBI" id="CHEBI:59789"/>
    </ligand>
</feature>
<accession>A7HKS1</accession>
<sequence length="246" mass="28409">MRIGILTIFPDFVKVIKEYGVIAQAVENNLLQIDIFNLRDFTTDKHKVVDDYAYGGGPGMVMKPEPFFKFFEYYNQMFGKPYVVLTSPQGKTLNNEIAKKLSAQERLLIICGRYEGIDERVMKFVDEEISIGDYVLTGGELPAMVITDVVSRFIPGVVEEESVKNDSFYNDLLDHPHYTRPRNIDGLEVPEVLLSGNHEEIELWRRKESLRKTISKRPDLFLKHQFDEVDKKALLLLFKELIKDAK</sequence>
<keyword id="KW-0963">Cytoplasm</keyword>
<keyword id="KW-0489">Methyltransferase</keyword>
<keyword id="KW-1185">Reference proteome</keyword>
<keyword id="KW-0949">S-adenosyl-L-methionine</keyword>
<keyword id="KW-0808">Transferase</keyword>
<keyword id="KW-0819">tRNA processing</keyword>
<protein>
    <recommendedName>
        <fullName evidence="1">tRNA (guanine-N(1)-)-methyltransferase</fullName>
        <ecNumber evidence="1">2.1.1.228</ecNumber>
    </recommendedName>
    <alternativeName>
        <fullName evidence="1">M1G-methyltransferase</fullName>
    </alternativeName>
    <alternativeName>
        <fullName evidence="1">tRNA [GM37] methyltransferase</fullName>
    </alternativeName>
</protein>
<name>TRMD_FERNB</name>
<dbReference type="EC" id="2.1.1.228" evidence="1"/>
<dbReference type="EMBL" id="CP000771">
    <property type="protein sequence ID" value="ABS60504.1"/>
    <property type="molecule type" value="Genomic_DNA"/>
</dbReference>
<dbReference type="RefSeq" id="WP_011993823.1">
    <property type="nucleotide sequence ID" value="NC_009718.1"/>
</dbReference>
<dbReference type="SMR" id="A7HKS1"/>
<dbReference type="STRING" id="381764.Fnod_0649"/>
<dbReference type="KEGG" id="fno:Fnod_0649"/>
<dbReference type="eggNOG" id="COG0336">
    <property type="taxonomic scope" value="Bacteria"/>
</dbReference>
<dbReference type="HOGENOM" id="CLU_047363_0_1_0"/>
<dbReference type="OrthoDB" id="9807416at2"/>
<dbReference type="Proteomes" id="UP000002415">
    <property type="component" value="Chromosome"/>
</dbReference>
<dbReference type="GO" id="GO:0005829">
    <property type="term" value="C:cytosol"/>
    <property type="evidence" value="ECO:0007669"/>
    <property type="project" value="TreeGrafter"/>
</dbReference>
<dbReference type="GO" id="GO:0052906">
    <property type="term" value="F:tRNA (guanine(37)-N1)-methyltransferase activity"/>
    <property type="evidence" value="ECO:0007669"/>
    <property type="project" value="UniProtKB-UniRule"/>
</dbReference>
<dbReference type="GO" id="GO:0002939">
    <property type="term" value="P:tRNA N1-guanine methylation"/>
    <property type="evidence" value="ECO:0007669"/>
    <property type="project" value="TreeGrafter"/>
</dbReference>
<dbReference type="CDD" id="cd18080">
    <property type="entry name" value="TrmD-like"/>
    <property type="match status" value="1"/>
</dbReference>
<dbReference type="FunFam" id="1.10.1270.20:FF:000001">
    <property type="entry name" value="tRNA (guanine-N(1)-)-methyltransferase"/>
    <property type="match status" value="1"/>
</dbReference>
<dbReference type="FunFam" id="3.40.1280.10:FF:000001">
    <property type="entry name" value="tRNA (guanine-N(1)-)-methyltransferase"/>
    <property type="match status" value="1"/>
</dbReference>
<dbReference type="Gene3D" id="3.40.1280.10">
    <property type="match status" value="1"/>
</dbReference>
<dbReference type="Gene3D" id="1.10.1270.20">
    <property type="entry name" value="tRNA(m1g37)methyltransferase, domain 2"/>
    <property type="match status" value="1"/>
</dbReference>
<dbReference type="HAMAP" id="MF_00605">
    <property type="entry name" value="TrmD"/>
    <property type="match status" value="1"/>
</dbReference>
<dbReference type="InterPro" id="IPR029028">
    <property type="entry name" value="Alpha/beta_knot_MTases"/>
</dbReference>
<dbReference type="InterPro" id="IPR023148">
    <property type="entry name" value="tRNA_m1G_MeTrfase_C_sf"/>
</dbReference>
<dbReference type="InterPro" id="IPR002649">
    <property type="entry name" value="tRNA_m1G_MeTrfase_TrmD"/>
</dbReference>
<dbReference type="InterPro" id="IPR029026">
    <property type="entry name" value="tRNA_m1G_MTases_N"/>
</dbReference>
<dbReference type="InterPro" id="IPR016009">
    <property type="entry name" value="tRNA_MeTrfase_TRMD/TRM10"/>
</dbReference>
<dbReference type="NCBIfam" id="NF000648">
    <property type="entry name" value="PRK00026.1"/>
    <property type="match status" value="1"/>
</dbReference>
<dbReference type="NCBIfam" id="TIGR00088">
    <property type="entry name" value="trmD"/>
    <property type="match status" value="1"/>
</dbReference>
<dbReference type="PANTHER" id="PTHR46417">
    <property type="entry name" value="TRNA (GUANINE-N(1)-)-METHYLTRANSFERASE"/>
    <property type="match status" value="1"/>
</dbReference>
<dbReference type="PANTHER" id="PTHR46417:SF1">
    <property type="entry name" value="TRNA (GUANINE-N(1)-)-METHYLTRANSFERASE"/>
    <property type="match status" value="1"/>
</dbReference>
<dbReference type="Pfam" id="PF01746">
    <property type="entry name" value="tRNA_m1G_MT"/>
    <property type="match status" value="1"/>
</dbReference>
<dbReference type="PIRSF" id="PIRSF000386">
    <property type="entry name" value="tRNA_mtase"/>
    <property type="match status" value="1"/>
</dbReference>
<dbReference type="SUPFAM" id="SSF75217">
    <property type="entry name" value="alpha/beta knot"/>
    <property type="match status" value="1"/>
</dbReference>
<organism>
    <name type="scientific">Fervidobacterium nodosum (strain ATCC 35602 / DSM 5306 / Rt17-B1)</name>
    <dbReference type="NCBI Taxonomy" id="381764"/>
    <lineage>
        <taxon>Bacteria</taxon>
        <taxon>Thermotogati</taxon>
        <taxon>Thermotogota</taxon>
        <taxon>Thermotogae</taxon>
        <taxon>Thermotogales</taxon>
        <taxon>Fervidobacteriaceae</taxon>
        <taxon>Fervidobacterium</taxon>
    </lineage>
</organism>
<reference key="1">
    <citation type="submission" date="2007-07" db="EMBL/GenBank/DDBJ databases">
        <title>Complete sequence of Fervidobacterium nodosum Rt17-B1.</title>
        <authorList>
            <consortium name="US DOE Joint Genome Institute"/>
            <person name="Copeland A."/>
            <person name="Lucas S."/>
            <person name="Lapidus A."/>
            <person name="Barry K."/>
            <person name="Glavina del Rio T."/>
            <person name="Dalin E."/>
            <person name="Tice H."/>
            <person name="Pitluck S."/>
            <person name="Saunders E."/>
            <person name="Brettin T."/>
            <person name="Bruce D."/>
            <person name="Detter J.C."/>
            <person name="Han C."/>
            <person name="Schmutz J."/>
            <person name="Larimer F."/>
            <person name="Land M."/>
            <person name="Hauser L."/>
            <person name="Kyrpides N."/>
            <person name="Mikhailova N."/>
            <person name="Nelson K."/>
            <person name="Gogarten J.P."/>
            <person name="Noll K."/>
            <person name="Richardson P."/>
        </authorList>
    </citation>
    <scope>NUCLEOTIDE SEQUENCE [LARGE SCALE GENOMIC DNA]</scope>
    <source>
        <strain>ATCC 35602 / DSM 5306 / Rt17-B1</strain>
    </source>
</reference>
<evidence type="ECO:0000255" key="1">
    <source>
        <dbReference type="HAMAP-Rule" id="MF_00605"/>
    </source>
</evidence>
<comment type="function">
    <text evidence="1">Specifically methylates guanosine-37 in various tRNAs.</text>
</comment>
<comment type="catalytic activity">
    <reaction evidence="1">
        <text>guanosine(37) in tRNA + S-adenosyl-L-methionine = N(1)-methylguanosine(37) in tRNA + S-adenosyl-L-homocysteine + H(+)</text>
        <dbReference type="Rhea" id="RHEA:36899"/>
        <dbReference type="Rhea" id="RHEA-COMP:10145"/>
        <dbReference type="Rhea" id="RHEA-COMP:10147"/>
        <dbReference type="ChEBI" id="CHEBI:15378"/>
        <dbReference type="ChEBI" id="CHEBI:57856"/>
        <dbReference type="ChEBI" id="CHEBI:59789"/>
        <dbReference type="ChEBI" id="CHEBI:73542"/>
        <dbReference type="ChEBI" id="CHEBI:74269"/>
        <dbReference type="EC" id="2.1.1.228"/>
    </reaction>
</comment>
<comment type="subunit">
    <text evidence="1">Homodimer.</text>
</comment>
<comment type="subcellular location">
    <subcellularLocation>
        <location evidence="1">Cytoplasm</location>
    </subcellularLocation>
</comment>
<comment type="similarity">
    <text evidence="1">Belongs to the RNA methyltransferase TrmD family.</text>
</comment>